<protein>
    <recommendedName>
        <fullName evidence="1">Nucleoside diphosphate kinase</fullName>
        <shortName evidence="1">NDK</shortName>
        <shortName evidence="1">NDP kinase</shortName>
        <ecNumber evidence="1">2.7.4.6</ecNumber>
    </recommendedName>
    <alternativeName>
        <fullName evidence="1">Nucleoside-2-P kinase</fullName>
    </alternativeName>
</protein>
<reference key="1">
    <citation type="journal article" date="2008" name="BMC Genomics">
        <title>Genomics of an extreme psychrophile, Psychromonas ingrahamii.</title>
        <authorList>
            <person name="Riley M."/>
            <person name="Staley J.T."/>
            <person name="Danchin A."/>
            <person name="Wang T.Z."/>
            <person name="Brettin T.S."/>
            <person name="Hauser L.J."/>
            <person name="Land M.L."/>
            <person name="Thompson L.S."/>
        </authorList>
    </citation>
    <scope>NUCLEOTIDE SEQUENCE [LARGE SCALE GENOMIC DNA]</scope>
    <source>
        <strain>DSM 17664 / CCUG 51855 / 37</strain>
    </source>
</reference>
<gene>
    <name evidence="1" type="primary">ndk</name>
    <name type="ordered locus">Ping_3326</name>
</gene>
<evidence type="ECO:0000255" key="1">
    <source>
        <dbReference type="HAMAP-Rule" id="MF_00451"/>
    </source>
</evidence>
<name>NDK_PSYIN</name>
<sequence>MPLERTLSIIKPDAVGKHLTGRILARFERAGLQPVAIKMVRLTSEQAEAFYAEHKGREFYQPLIDFMTSGPMVVQVLQAENAINLYREMIGKTDPTQAAAGTIRADFAESTRCNAVHGSDSPASAAKEIAFFFSDDEICPPAAD</sequence>
<comment type="function">
    <text evidence="1">Major role in the synthesis of nucleoside triphosphates other than ATP. The ATP gamma phosphate is transferred to the NDP beta phosphate via a ping-pong mechanism, using a phosphorylated active-site intermediate.</text>
</comment>
<comment type="catalytic activity">
    <reaction evidence="1">
        <text>a 2'-deoxyribonucleoside 5'-diphosphate + ATP = a 2'-deoxyribonucleoside 5'-triphosphate + ADP</text>
        <dbReference type="Rhea" id="RHEA:44640"/>
        <dbReference type="ChEBI" id="CHEBI:30616"/>
        <dbReference type="ChEBI" id="CHEBI:61560"/>
        <dbReference type="ChEBI" id="CHEBI:73316"/>
        <dbReference type="ChEBI" id="CHEBI:456216"/>
        <dbReference type="EC" id="2.7.4.6"/>
    </reaction>
</comment>
<comment type="catalytic activity">
    <reaction evidence="1">
        <text>a ribonucleoside 5'-diphosphate + ATP = a ribonucleoside 5'-triphosphate + ADP</text>
        <dbReference type="Rhea" id="RHEA:18113"/>
        <dbReference type="ChEBI" id="CHEBI:30616"/>
        <dbReference type="ChEBI" id="CHEBI:57930"/>
        <dbReference type="ChEBI" id="CHEBI:61557"/>
        <dbReference type="ChEBI" id="CHEBI:456216"/>
        <dbReference type="EC" id="2.7.4.6"/>
    </reaction>
</comment>
<comment type="cofactor">
    <cofactor evidence="1">
        <name>Mg(2+)</name>
        <dbReference type="ChEBI" id="CHEBI:18420"/>
    </cofactor>
</comment>
<comment type="subunit">
    <text evidence="1">Homotetramer.</text>
</comment>
<comment type="subcellular location">
    <subcellularLocation>
        <location evidence="1">Cytoplasm</location>
    </subcellularLocation>
</comment>
<comment type="similarity">
    <text evidence="1">Belongs to the NDK family.</text>
</comment>
<accession>A1SZU8</accession>
<dbReference type="EC" id="2.7.4.6" evidence="1"/>
<dbReference type="EMBL" id="CP000510">
    <property type="protein sequence ID" value="ABM05013.1"/>
    <property type="molecule type" value="Genomic_DNA"/>
</dbReference>
<dbReference type="RefSeq" id="WP_011771565.1">
    <property type="nucleotide sequence ID" value="NC_008709.1"/>
</dbReference>
<dbReference type="SMR" id="A1SZU8"/>
<dbReference type="STRING" id="357804.Ping_3326"/>
<dbReference type="KEGG" id="pin:Ping_3326"/>
<dbReference type="eggNOG" id="COG0105">
    <property type="taxonomic scope" value="Bacteria"/>
</dbReference>
<dbReference type="HOGENOM" id="CLU_060216_8_1_6"/>
<dbReference type="OrthoDB" id="9801161at2"/>
<dbReference type="Proteomes" id="UP000000639">
    <property type="component" value="Chromosome"/>
</dbReference>
<dbReference type="GO" id="GO:0005737">
    <property type="term" value="C:cytoplasm"/>
    <property type="evidence" value="ECO:0007669"/>
    <property type="project" value="UniProtKB-SubCell"/>
</dbReference>
<dbReference type="GO" id="GO:0005524">
    <property type="term" value="F:ATP binding"/>
    <property type="evidence" value="ECO:0007669"/>
    <property type="project" value="UniProtKB-UniRule"/>
</dbReference>
<dbReference type="GO" id="GO:0046872">
    <property type="term" value="F:metal ion binding"/>
    <property type="evidence" value="ECO:0007669"/>
    <property type="project" value="UniProtKB-KW"/>
</dbReference>
<dbReference type="GO" id="GO:0004550">
    <property type="term" value="F:nucleoside diphosphate kinase activity"/>
    <property type="evidence" value="ECO:0007669"/>
    <property type="project" value="UniProtKB-UniRule"/>
</dbReference>
<dbReference type="GO" id="GO:0006241">
    <property type="term" value="P:CTP biosynthetic process"/>
    <property type="evidence" value="ECO:0007669"/>
    <property type="project" value="UniProtKB-UniRule"/>
</dbReference>
<dbReference type="GO" id="GO:0006183">
    <property type="term" value="P:GTP biosynthetic process"/>
    <property type="evidence" value="ECO:0007669"/>
    <property type="project" value="UniProtKB-UniRule"/>
</dbReference>
<dbReference type="GO" id="GO:0006228">
    <property type="term" value="P:UTP biosynthetic process"/>
    <property type="evidence" value="ECO:0007669"/>
    <property type="project" value="UniProtKB-UniRule"/>
</dbReference>
<dbReference type="CDD" id="cd04413">
    <property type="entry name" value="NDPk_I"/>
    <property type="match status" value="1"/>
</dbReference>
<dbReference type="FunFam" id="3.30.70.141:FF:000003">
    <property type="entry name" value="Nucleoside diphosphate kinase"/>
    <property type="match status" value="1"/>
</dbReference>
<dbReference type="Gene3D" id="3.30.70.141">
    <property type="entry name" value="Nucleoside diphosphate kinase-like domain"/>
    <property type="match status" value="1"/>
</dbReference>
<dbReference type="HAMAP" id="MF_00451">
    <property type="entry name" value="NDP_kinase"/>
    <property type="match status" value="1"/>
</dbReference>
<dbReference type="InterPro" id="IPR034907">
    <property type="entry name" value="NDK-like_dom"/>
</dbReference>
<dbReference type="InterPro" id="IPR036850">
    <property type="entry name" value="NDK-like_dom_sf"/>
</dbReference>
<dbReference type="InterPro" id="IPR001564">
    <property type="entry name" value="Nucleoside_diP_kinase"/>
</dbReference>
<dbReference type="InterPro" id="IPR023005">
    <property type="entry name" value="Nucleoside_diP_kinase_AS"/>
</dbReference>
<dbReference type="NCBIfam" id="NF001908">
    <property type="entry name" value="PRK00668.1"/>
    <property type="match status" value="1"/>
</dbReference>
<dbReference type="PANTHER" id="PTHR46161">
    <property type="entry name" value="NUCLEOSIDE DIPHOSPHATE KINASE"/>
    <property type="match status" value="1"/>
</dbReference>
<dbReference type="PANTHER" id="PTHR46161:SF3">
    <property type="entry name" value="NUCLEOSIDE DIPHOSPHATE KINASE DDB_G0292928-RELATED"/>
    <property type="match status" value="1"/>
</dbReference>
<dbReference type="Pfam" id="PF00334">
    <property type="entry name" value="NDK"/>
    <property type="match status" value="1"/>
</dbReference>
<dbReference type="PRINTS" id="PR01243">
    <property type="entry name" value="NUCDPKINASE"/>
</dbReference>
<dbReference type="SMART" id="SM00562">
    <property type="entry name" value="NDK"/>
    <property type="match status" value="1"/>
</dbReference>
<dbReference type="SUPFAM" id="SSF54919">
    <property type="entry name" value="Nucleoside diphosphate kinase, NDK"/>
    <property type="match status" value="1"/>
</dbReference>
<dbReference type="PROSITE" id="PS00469">
    <property type="entry name" value="NDPK"/>
    <property type="match status" value="1"/>
</dbReference>
<dbReference type="PROSITE" id="PS51374">
    <property type="entry name" value="NDPK_LIKE"/>
    <property type="match status" value="1"/>
</dbReference>
<keyword id="KW-0067">ATP-binding</keyword>
<keyword id="KW-0963">Cytoplasm</keyword>
<keyword id="KW-0418">Kinase</keyword>
<keyword id="KW-0460">Magnesium</keyword>
<keyword id="KW-0479">Metal-binding</keyword>
<keyword id="KW-0546">Nucleotide metabolism</keyword>
<keyword id="KW-0547">Nucleotide-binding</keyword>
<keyword id="KW-0597">Phosphoprotein</keyword>
<keyword id="KW-1185">Reference proteome</keyword>
<keyword id="KW-0808">Transferase</keyword>
<feature type="chain" id="PRO_1000026280" description="Nucleoside diphosphate kinase">
    <location>
        <begin position="1"/>
        <end position="144"/>
    </location>
</feature>
<feature type="active site" description="Pros-phosphohistidine intermediate" evidence="1">
    <location>
        <position position="117"/>
    </location>
</feature>
<feature type="binding site" evidence="1">
    <location>
        <position position="11"/>
    </location>
    <ligand>
        <name>ATP</name>
        <dbReference type="ChEBI" id="CHEBI:30616"/>
    </ligand>
</feature>
<feature type="binding site" evidence="1">
    <location>
        <position position="59"/>
    </location>
    <ligand>
        <name>ATP</name>
        <dbReference type="ChEBI" id="CHEBI:30616"/>
    </ligand>
</feature>
<feature type="binding site" evidence="1">
    <location>
        <position position="87"/>
    </location>
    <ligand>
        <name>ATP</name>
        <dbReference type="ChEBI" id="CHEBI:30616"/>
    </ligand>
</feature>
<feature type="binding site" evidence="1">
    <location>
        <position position="93"/>
    </location>
    <ligand>
        <name>ATP</name>
        <dbReference type="ChEBI" id="CHEBI:30616"/>
    </ligand>
</feature>
<feature type="binding site" evidence="1">
    <location>
        <position position="104"/>
    </location>
    <ligand>
        <name>ATP</name>
        <dbReference type="ChEBI" id="CHEBI:30616"/>
    </ligand>
</feature>
<feature type="binding site" evidence="1">
    <location>
        <position position="114"/>
    </location>
    <ligand>
        <name>ATP</name>
        <dbReference type="ChEBI" id="CHEBI:30616"/>
    </ligand>
</feature>
<organism>
    <name type="scientific">Psychromonas ingrahamii (strain DSM 17664 / CCUG 51855 / 37)</name>
    <dbReference type="NCBI Taxonomy" id="357804"/>
    <lineage>
        <taxon>Bacteria</taxon>
        <taxon>Pseudomonadati</taxon>
        <taxon>Pseudomonadota</taxon>
        <taxon>Gammaproteobacteria</taxon>
        <taxon>Alteromonadales</taxon>
        <taxon>Psychromonadaceae</taxon>
        <taxon>Psychromonas</taxon>
    </lineage>
</organism>
<proteinExistence type="inferred from homology"/>